<keyword id="KW-0678">Repressor</keyword>
<keyword id="KW-0346">Stress response</keyword>
<keyword id="KW-0804">Transcription</keyword>
<keyword id="KW-0805">Transcription regulation</keyword>
<accession>Q3AQP3</accession>
<evidence type="ECO:0000255" key="1">
    <source>
        <dbReference type="HAMAP-Rule" id="MF_00081"/>
    </source>
</evidence>
<reference key="1">
    <citation type="submission" date="2005-08" db="EMBL/GenBank/DDBJ databases">
        <title>Complete sequence of Chlorobium chlorochromatii CaD3.</title>
        <authorList>
            <consortium name="US DOE Joint Genome Institute"/>
            <person name="Copeland A."/>
            <person name="Lucas S."/>
            <person name="Lapidus A."/>
            <person name="Barry K."/>
            <person name="Detter J.C."/>
            <person name="Glavina T."/>
            <person name="Hammon N."/>
            <person name="Israni S."/>
            <person name="Pitluck S."/>
            <person name="Bryant D."/>
            <person name="Schmutz J."/>
            <person name="Larimer F."/>
            <person name="Land M."/>
            <person name="Kyrpides N."/>
            <person name="Ivanova N."/>
            <person name="Richardson P."/>
        </authorList>
    </citation>
    <scope>NUCLEOTIDE SEQUENCE [LARGE SCALE GENOMIC DNA]</scope>
    <source>
        <strain>CaD3</strain>
    </source>
</reference>
<sequence length="348" mass="39224">MDYRELTARERQILGIIIQSYVVSAAPVGSKYIARHYNLGLSDATIRNVMAELEELGFISQPHTSAGRVPTDKGYRYYVDLIMTVKTLDEQEKQRFEQHITPLERKGTSADVLLSAVKVLGTISRQLSVVLSPTLSNALFEKLDMVLLSSTRMMVIISIQSLFVKTIVMELHMQVSRQMLDEVVDVLNERLSGLTLSEIRRSINQRLADCSCDNELKNLIVRSAGTLFDEMPVFERLYISGTEYLVEQPEFQQPEKVRDLITMLEDKFSVATLVEQHHANNPDVTITIGKEHGKRQAEDLTVLSAPYYVGDMVGTVGILGPKRMDYEHAVRILHYMAGSLSSTLSIQN</sequence>
<organism>
    <name type="scientific">Chlorobium chlorochromatii (strain CaD3)</name>
    <dbReference type="NCBI Taxonomy" id="340177"/>
    <lineage>
        <taxon>Bacteria</taxon>
        <taxon>Pseudomonadati</taxon>
        <taxon>Chlorobiota</taxon>
        <taxon>Chlorobiia</taxon>
        <taxon>Chlorobiales</taxon>
        <taxon>Chlorobiaceae</taxon>
        <taxon>Chlorobium/Pelodictyon group</taxon>
        <taxon>Chlorobium</taxon>
    </lineage>
</organism>
<gene>
    <name evidence="1" type="primary">hrcA</name>
    <name type="ordered locus">Cag_1424</name>
</gene>
<protein>
    <recommendedName>
        <fullName evidence="1">Heat-inducible transcription repressor HrcA</fullName>
    </recommendedName>
</protein>
<proteinExistence type="inferred from homology"/>
<comment type="function">
    <text evidence="1">Negative regulator of class I heat shock genes (grpE-dnaK-dnaJ and groELS operons). Prevents heat-shock induction of these operons.</text>
</comment>
<comment type="similarity">
    <text evidence="1">Belongs to the HrcA family.</text>
</comment>
<name>HRCA_CHLCH</name>
<dbReference type="EMBL" id="CP000108">
    <property type="protein sequence ID" value="ABB28682.1"/>
    <property type="molecule type" value="Genomic_DNA"/>
</dbReference>
<dbReference type="SMR" id="Q3AQP3"/>
<dbReference type="STRING" id="340177.Cag_1424"/>
<dbReference type="KEGG" id="cch:Cag_1424"/>
<dbReference type="eggNOG" id="COG1420">
    <property type="taxonomic scope" value="Bacteria"/>
</dbReference>
<dbReference type="HOGENOM" id="CLU_050019_1_0_10"/>
<dbReference type="OrthoDB" id="9783139at2"/>
<dbReference type="GO" id="GO:0003677">
    <property type="term" value="F:DNA binding"/>
    <property type="evidence" value="ECO:0007669"/>
    <property type="project" value="InterPro"/>
</dbReference>
<dbReference type="GO" id="GO:0045892">
    <property type="term" value="P:negative regulation of DNA-templated transcription"/>
    <property type="evidence" value="ECO:0007669"/>
    <property type="project" value="UniProtKB-UniRule"/>
</dbReference>
<dbReference type="Gene3D" id="3.30.450.40">
    <property type="match status" value="1"/>
</dbReference>
<dbReference type="Gene3D" id="3.30.390.60">
    <property type="entry name" value="Heat-inducible transcription repressor hrca homolog, domain 3"/>
    <property type="match status" value="1"/>
</dbReference>
<dbReference type="Gene3D" id="1.10.10.10">
    <property type="entry name" value="Winged helix-like DNA-binding domain superfamily/Winged helix DNA-binding domain"/>
    <property type="match status" value="1"/>
</dbReference>
<dbReference type="HAMAP" id="MF_00081">
    <property type="entry name" value="HrcA"/>
    <property type="match status" value="1"/>
</dbReference>
<dbReference type="InterPro" id="IPR029016">
    <property type="entry name" value="GAF-like_dom_sf"/>
</dbReference>
<dbReference type="InterPro" id="IPR002571">
    <property type="entry name" value="HrcA"/>
</dbReference>
<dbReference type="InterPro" id="IPR021153">
    <property type="entry name" value="HrcA_C"/>
</dbReference>
<dbReference type="InterPro" id="IPR036388">
    <property type="entry name" value="WH-like_DNA-bd_sf"/>
</dbReference>
<dbReference type="InterPro" id="IPR036390">
    <property type="entry name" value="WH_DNA-bd_sf"/>
</dbReference>
<dbReference type="InterPro" id="IPR005104">
    <property type="entry name" value="WHTH_HrcA_DNA-bd"/>
</dbReference>
<dbReference type="InterPro" id="IPR023120">
    <property type="entry name" value="WHTH_transcript_rep_HrcA_IDD"/>
</dbReference>
<dbReference type="NCBIfam" id="TIGR00331">
    <property type="entry name" value="hrcA"/>
    <property type="match status" value="1"/>
</dbReference>
<dbReference type="PANTHER" id="PTHR34824">
    <property type="entry name" value="HEAT-INDUCIBLE TRANSCRIPTION REPRESSOR HRCA"/>
    <property type="match status" value="1"/>
</dbReference>
<dbReference type="PANTHER" id="PTHR34824:SF1">
    <property type="entry name" value="HEAT-INDUCIBLE TRANSCRIPTION REPRESSOR HRCA"/>
    <property type="match status" value="1"/>
</dbReference>
<dbReference type="Pfam" id="PF01628">
    <property type="entry name" value="HrcA"/>
    <property type="match status" value="1"/>
</dbReference>
<dbReference type="Pfam" id="PF03444">
    <property type="entry name" value="HrcA_DNA-bdg"/>
    <property type="match status" value="1"/>
</dbReference>
<dbReference type="PIRSF" id="PIRSF005485">
    <property type="entry name" value="HrcA"/>
    <property type="match status" value="1"/>
</dbReference>
<dbReference type="SUPFAM" id="SSF55781">
    <property type="entry name" value="GAF domain-like"/>
    <property type="match status" value="1"/>
</dbReference>
<dbReference type="SUPFAM" id="SSF46785">
    <property type="entry name" value="Winged helix' DNA-binding domain"/>
    <property type="match status" value="1"/>
</dbReference>
<feature type="chain" id="PRO_1000010393" description="Heat-inducible transcription repressor HrcA">
    <location>
        <begin position="1"/>
        <end position="348"/>
    </location>
</feature>